<gene>
    <name evidence="1" type="primary">queF</name>
    <name type="ordered locus">Bcep18194_A6065</name>
</gene>
<keyword id="KW-0963">Cytoplasm</keyword>
<keyword id="KW-0521">NADP</keyword>
<keyword id="KW-0560">Oxidoreductase</keyword>
<keyword id="KW-0671">Queuosine biosynthesis</keyword>
<accession>Q39D07</accession>
<dbReference type="EC" id="1.7.1.13" evidence="1"/>
<dbReference type="EMBL" id="CP000151">
    <property type="protein sequence ID" value="ABB09659.1"/>
    <property type="molecule type" value="Genomic_DNA"/>
</dbReference>
<dbReference type="RefSeq" id="WP_011353169.1">
    <property type="nucleotide sequence ID" value="NC_007510.1"/>
</dbReference>
<dbReference type="SMR" id="Q39D07"/>
<dbReference type="GeneID" id="45095947"/>
<dbReference type="KEGG" id="bur:Bcep18194_A6065"/>
<dbReference type="PATRIC" id="fig|482957.22.peg.3066"/>
<dbReference type="HOGENOM" id="CLU_054738_0_0_4"/>
<dbReference type="UniPathway" id="UPA00392"/>
<dbReference type="Proteomes" id="UP000002705">
    <property type="component" value="Chromosome 1"/>
</dbReference>
<dbReference type="GO" id="GO:0005737">
    <property type="term" value="C:cytoplasm"/>
    <property type="evidence" value="ECO:0007669"/>
    <property type="project" value="UniProtKB-SubCell"/>
</dbReference>
<dbReference type="GO" id="GO:0033739">
    <property type="term" value="F:preQ1 synthase activity"/>
    <property type="evidence" value="ECO:0007669"/>
    <property type="project" value="UniProtKB-UniRule"/>
</dbReference>
<dbReference type="GO" id="GO:0008616">
    <property type="term" value="P:queuosine biosynthetic process"/>
    <property type="evidence" value="ECO:0007669"/>
    <property type="project" value="UniProtKB-UniRule"/>
</dbReference>
<dbReference type="GO" id="GO:0006400">
    <property type="term" value="P:tRNA modification"/>
    <property type="evidence" value="ECO:0007669"/>
    <property type="project" value="UniProtKB-UniRule"/>
</dbReference>
<dbReference type="Gene3D" id="3.30.1130.10">
    <property type="match status" value="2"/>
</dbReference>
<dbReference type="HAMAP" id="MF_00817">
    <property type="entry name" value="QueF_type2"/>
    <property type="match status" value="1"/>
</dbReference>
<dbReference type="InterPro" id="IPR043133">
    <property type="entry name" value="GTP-CH-I_C/QueF"/>
</dbReference>
<dbReference type="InterPro" id="IPR050084">
    <property type="entry name" value="NADPH_dep_7-cyano-7-deazaG_red"/>
</dbReference>
<dbReference type="InterPro" id="IPR029500">
    <property type="entry name" value="QueF"/>
</dbReference>
<dbReference type="InterPro" id="IPR029139">
    <property type="entry name" value="QueF_N"/>
</dbReference>
<dbReference type="InterPro" id="IPR016428">
    <property type="entry name" value="QueF_type2"/>
</dbReference>
<dbReference type="NCBIfam" id="TIGR03138">
    <property type="entry name" value="QueF"/>
    <property type="match status" value="1"/>
</dbReference>
<dbReference type="PANTHER" id="PTHR34354">
    <property type="entry name" value="NADPH-DEPENDENT 7-CYANO-7-DEAZAGUANINE REDUCTASE"/>
    <property type="match status" value="1"/>
</dbReference>
<dbReference type="PANTHER" id="PTHR34354:SF1">
    <property type="entry name" value="NADPH-DEPENDENT 7-CYANO-7-DEAZAGUANINE REDUCTASE"/>
    <property type="match status" value="1"/>
</dbReference>
<dbReference type="Pfam" id="PF14489">
    <property type="entry name" value="QueF"/>
    <property type="match status" value="1"/>
</dbReference>
<dbReference type="Pfam" id="PF14819">
    <property type="entry name" value="QueF_N"/>
    <property type="match status" value="1"/>
</dbReference>
<dbReference type="PIRSF" id="PIRSF004750">
    <property type="entry name" value="Nitrile_oxidored_YqcD_prd"/>
    <property type="match status" value="1"/>
</dbReference>
<dbReference type="SUPFAM" id="SSF55620">
    <property type="entry name" value="Tetrahydrobiopterin biosynthesis enzymes-like"/>
    <property type="match status" value="1"/>
</dbReference>
<protein>
    <recommendedName>
        <fullName evidence="1">NADPH-dependent 7-cyano-7-deazaguanine reductase</fullName>
        <ecNumber evidence="1">1.7.1.13</ecNumber>
    </recommendedName>
    <alternativeName>
        <fullName evidence="1">7-cyano-7-carbaguanine reductase</fullName>
    </alternativeName>
    <alternativeName>
        <fullName evidence="1">NADPH-dependent nitrile oxidoreductase</fullName>
    </alternativeName>
    <alternativeName>
        <fullName evidence="1">PreQ(0) reductase</fullName>
    </alternativeName>
</protein>
<comment type="function">
    <text evidence="1">Catalyzes the NADPH-dependent reduction of 7-cyano-7-deazaguanine (preQ0) to 7-aminomethyl-7-deazaguanine (preQ1).</text>
</comment>
<comment type="catalytic activity">
    <reaction evidence="1">
        <text>7-aminomethyl-7-carbaguanine + 2 NADP(+) = 7-cyano-7-deazaguanine + 2 NADPH + 3 H(+)</text>
        <dbReference type="Rhea" id="RHEA:13409"/>
        <dbReference type="ChEBI" id="CHEBI:15378"/>
        <dbReference type="ChEBI" id="CHEBI:45075"/>
        <dbReference type="ChEBI" id="CHEBI:57783"/>
        <dbReference type="ChEBI" id="CHEBI:58349"/>
        <dbReference type="ChEBI" id="CHEBI:58703"/>
        <dbReference type="EC" id="1.7.1.13"/>
    </reaction>
</comment>
<comment type="pathway">
    <text evidence="1">tRNA modification; tRNA-queuosine biosynthesis.</text>
</comment>
<comment type="subunit">
    <text evidence="1">Homodimer.</text>
</comment>
<comment type="subcellular location">
    <subcellularLocation>
        <location evidence="1">Cytoplasm</location>
    </subcellularLocation>
</comment>
<comment type="similarity">
    <text evidence="1">Belongs to the GTP cyclohydrolase I family. QueF type 2 subfamily.</text>
</comment>
<sequence length="274" mass="30472">MNPEHSPLGKATVYAAQYDASLLFPIPRAGAREQLGITSALPFFGTDIWNAYELSWLNARGKPQIAVATFYVPAESPNIVESKSFKLYLGSFAQTTFDSIDAVRDTLKRDVSAACGATVSVQLVSPHDFGKLEMEELDGLSLDRLDLDTDVYEPDPSLLKAAEDEAPVEETLVSDLLRSNCPVTGQPDWGSVQIHYVGPQIDHAGLLRYIISFRNHTGFHEQCVERIFLDILHACKPVKLAVYARYTRRGGLDINPFRTNYNQPMPDNARNARQ</sequence>
<organism>
    <name type="scientific">Burkholderia lata (strain ATCC 17760 / DSM 23089 / LMG 22485 / NCIMB 9086 / R18194 / 383)</name>
    <dbReference type="NCBI Taxonomy" id="482957"/>
    <lineage>
        <taxon>Bacteria</taxon>
        <taxon>Pseudomonadati</taxon>
        <taxon>Pseudomonadota</taxon>
        <taxon>Betaproteobacteria</taxon>
        <taxon>Burkholderiales</taxon>
        <taxon>Burkholderiaceae</taxon>
        <taxon>Burkholderia</taxon>
        <taxon>Burkholderia cepacia complex</taxon>
    </lineage>
</organism>
<reference key="1">
    <citation type="submission" date="2005-10" db="EMBL/GenBank/DDBJ databases">
        <title>Complete sequence of chromosome 1 of Burkholderia sp. 383.</title>
        <authorList>
            <consortium name="US DOE Joint Genome Institute"/>
            <person name="Copeland A."/>
            <person name="Lucas S."/>
            <person name="Lapidus A."/>
            <person name="Barry K."/>
            <person name="Detter J.C."/>
            <person name="Glavina T."/>
            <person name="Hammon N."/>
            <person name="Israni S."/>
            <person name="Pitluck S."/>
            <person name="Chain P."/>
            <person name="Malfatti S."/>
            <person name="Shin M."/>
            <person name="Vergez L."/>
            <person name="Schmutz J."/>
            <person name="Larimer F."/>
            <person name="Land M."/>
            <person name="Kyrpides N."/>
            <person name="Lykidis A."/>
            <person name="Richardson P."/>
        </authorList>
    </citation>
    <scope>NUCLEOTIDE SEQUENCE [LARGE SCALE GENOMIC DNA]</scope>
    <source>
        <strain>ATCC 17760 / DSM 23089 / LMG 22485 / NCIMB 9086 / R18194 / 383</strain>
    </source>
</reference>
<evidence type="ECO:0000255" key="1">
    <source>
        <dbReference type="HAMAP-Rule" id="MF_00817"/>
    </source>
</evidence>
<feature type="chain" id="PRO_0000247705" description="NADPH-dependent 7-cyano-7-deazaguanine reductase">
    <location>
        <begin position="1"/>
        <end position="274"/>
    </location>
</feature>
<feature type="active site" description="Thioimide intermediate" evidence="1">
    <location>
        <position position="181"/>
    </location>
</feature>
<feature type="active site" description="Proton donor" evidence="1">
    <location>
        <position position="188"/>
    </location>
</feature>
<feature type="binding site" evidence="1">
    <location>
        <begin position="80"/>
        <end position="82"/>
    </location>
    <ligand>
        <name>substrate</name>
    </ligand>
</feature>
<feature type="binding site" evidence="1">
    <location>
        <begin position="82"/>
        <end position="83"/>
    </location>
    <ligand>
        <name>NADPH</name>
        <dbReference type="ChEBI" id="CHEBI:57783"/>
    </ligand>
</feature>
<feature type="binding site" evidence="1">
    <location>
        <begin position="220"/>
        <end position="221"/>
    </location>
    <ligand>
        <name>substrate</name>
    </ligand>
</feature>
<feature type="binding site" evidence="1">
    <location>
        <begin position="249"/>
        <end position="250"/>
    </location>
    <ligand>
        <name>NADPH</name>
        <dbReference type="ChEBI" id="CHEBI:57783"/>
    </ligand>
</feature>
<name>QUEF_BURL3</name>
<proteinExistence type="inferred from homology"/>